<sequence>MFYPDPFDVIIIGGGHAGTEAAMAAARMGQQTLLLTHNIDTLGQMSCNPAIGGIGKGHLVKEVDALGGLMAKAIDQAGIQFRILNASKGPAVRATRAQADRVLYRQAVRTALENQPNLMIFQQAVEDLIVENDRVVGAVTQMGLKFRAKAVVLTVGTFLDGKIHIGLDNYSGGRAGDPPSIPLSRRLRELPLRVGRLKTGTPPRIDARTIDFSVLAQQHGDNPMPVFSFMGNASQHPQQVPCYITHTNEKTHDVIRSNLDRSPMYAGVIEGVGPRYCPSIEDKVMRFADRNQHQIFLEPEGLTSNEIYPNGISTSLPFDVQMQIVRSMQGMENAKIVRPGYAIEYDFFDPRDLKPTLESKFIQGLFFAGQINGTTGYEEAAAQGLLAGLNAARLSADKEGWAPARSQAYLGVLVDDLCTLGTKEPYRMFTSRAEYRLMLREDNADLRLTEIGRELGLVDDERWARFNEKLENIERERQRLKSTWVTPSAEAAAEVNAHLTAPLSREASGEDLLRRPEMTYEKLTSLTPFAPALTDEQAAEQVEIQVKYEGYIARQQDEIEKQLRNENTLLPATLDYRQVSGLSNEVIAKLNDHKPASIGQASRISGVTPAAISILLVWLKKQGMLRRSA</sequence>
<reference key="1">
    <citation type="journal article" date="2009" name="J. Bacteriol.">
        <title>Complete genome sequence and comparative genome analysis of enteropathogenic Escherichia coli O127:H6 strain E2348/69.</title>
        <authorList>
            <person name="Iguchi A."/>
            <person name="Thomson N.R."/>
            <person name="Ogura Y."/>
            <person name="Saunders D."/>
            <person name="Ooka T."/>
            <person name="Henderson I.R."/>
            <person name="Harris D."/>
            <person name="Asadulghani M."/>
            <person name="Kurokawa K."/>
            <person name="Dean P."/>
            <person name="Kenny B."/>
            <person name="Quail M.A."/>
            <person name="Thurston S."/>
            <person name="Dougan G."/>
            <person name="Hayashi T."/>
            <person name="Parkhill J."/>
            <person name="Frankel G."/>
        </authorList>
    </citation>
    <scope>NUCLEOTIDE SEQUENCE [LARGE SCALE GENOMIC DNA]</scope>
    <source>
        <strain>E2348/69 / EPEC</strain>
    </source>
</reference>
<accession>B7UMK6</accession>
<dbReference type="EMBL" id="FM180568">
    <property type="protein sequence ID" value="CAS11599.1"/>
    <property type="molecule type" value="Genomic_DNA"/>
</dbReference>
<dbReference type="RefSeq" id="WP_000499785.1">
    <property type="nucleotide sequence ID" value="NC_011601.1"/>
</dbReference>
<dbReference type="SMR" id="B7UMK6"/>
<dbReference type="KEGG" id="ecg:E2348C_4051"/>
<dbReference type="HOGENOM" id="CLU_007831_2_2_6"/>
<dbReference type="Proteomes" id="UP000008205">
    <property type="component" value="Chromosome"/>
</dbReference>
<dbReference type="GO" id="GO:0005829">
    <property type="term" value="C:cytosol"/>
    <property type="evidence" value="ECO:0007669"/>
    <property type="project" value="TreeGrafter"/>
</dbReference>
<dbReference type="GO" id="GO:0050660">
    <property type="term" value="F:flavin adenine dinucleotide binding"/>
    <property type="evidence" value="ECO:0007669"/>
    <property type="project" value="UniProtKB-UniRule"/>
</dbReference>
<dbReference type="GO" id="GO:0030488">
    <property type="term" value="P:tRNA methylation"/>
    <property type="evidence" value="ECO:0007669"/>
    <property type="project" value="TreeGrafter"/>
</dbReference>
<dbReference type="GO" id="GO:0002098">
    <property type="term" value="P:tRNA wobble uridine modification"/>
    <property type="evidence" value="ECO:0007669"/>
    <property type="project" value="InterPro"/>
</dbReference>
<dbReference type="FunFam" id="1.10.10.1800:FF:000001">
    <property type="entry name" value="tRNA uridine 5-carboxymethylaminomethyl modification enzyme MnmG"/>
    <property type="match status" value="1"/>
</dbReference>
<dbReference type="FunFam" id="1.10.150.570:FF:000001">
    <property type="entry name" value="tRNA uridine 5-carboxymethylaminomethyl modification enzyme MnmG"/>
    <property type="match status" value="1"/>
</dbReference>
<dbReference type="FunFam" id="3.50.50.60:FF:000002">
    <property type="entry name" value="tRNA uridine 5-carboxymethylaminomethyl modification enzyme MnmG"/>
    <property type="match status" value="1"/>
</dbReference>
<dbReference type="FunFam" id="3.50.50.60:FF:000010">
    <property type="entry name" value="tRNA uridine 5-carboxymethylaminomethyl modification enzyme MnmG"/>
    <property type="match status" value="1"/>
</dbReference>
<dbReference type="Gene3D" id="3.50.50.60">
    <property type="entry name" value="FAD/NAD(P)-binding domain"/>
    <property type="match status" value="2"/>
</dbReference>
<dbReference type="Gene3D" id="1.10.150.570">
    <property type="entry name" value="GidA associated domain, C-terminal subdomain"/>
    <property type="match status" value="1"/>
</dbReference>
<dbReference type="Gene3D" id="1.10.10.1800">
    <property type="entry name" value="tRNA uridine 5-carboxymethylaminomethyl modification enzyme MnmG/GidA"/>
    <property type="match status" value="1"/>
</dbReference>
<dbReference type="HAMAP" id="MF_00129">
    <property type="entry name" value="MnmG_GidA"/>
    <property type="match status" value="1"/>
</dbReference>
<dbReference type="InterPro" id="IPR036188">
    <property type="entry name" value="FAD/NAD-bd_sf"/>
</dbReference>
<dbReference type="InterPro" id="IPR049312">
    <property type="entry name" value="GIDA_C_N"/>
</dbReference>
<dbReference type="InterPro" id="IPR004416">
    <property type="entry name" value="MnmG"/>
</dbReference>
<dbReference type="InterPro" id="IPR002218">
    <property type="entry name" value="MnmG-rel"/>
</dbReference>
<dbReference type="InterPro" id="IPR020595">
    <property type="entry name" value="MnmG-rel_CS"/>
</dbReference>
<dbReference type="InterPro" id="IPR026904">
    <property type="entry name" value="MnmG_C"/>
</dbReference>
<dbReference type="InterPro" id="IPR047001">
    <property type="entry name" value="MnmG_C_subdom"/>
</dbReference>
<dbReference type="InterPro" id="IPR044920">
    <property type="entry name" value="MnmG_C_subdom_sf"/>
</dbReference>
<dbReference type="InterPro" id="IPR040131">
    <property type="entry name" value="MnmG_N"/>
</dbReference>
<dbReference type="NCBIfam" id="TIGR00136">
    <property type="entry name" value="mnmG_gidA"/>
    <property type="match status" value="1"/>
</dbReference>
<dbReference type="PANTHER" id="PTHR11806">
    <property type="entry name" value="GLUCOSE INHIBITED DIVISION PROTEIN A"/>
    <property type="match status" value="1"/>
</dbReference>
<dbReference type="PANTHER" id="PTHR11806:SF0">
    <property type="entry name" value="PROTEIN MTO1 HOMOLOG, MITOCHONDRIAL"/>
    <property type="match status" value="1"/>
</dbReference>
<dbReference type="Pfam" id="PF01134">
    <property type="entry name" value="GIDA"/>
    <property type="match status" value="1"/>
</dbReference>
<dbReference type="Pfam" id="PF21680">
    <property type="entry name" value="GIDA_C_1st"/>
    <property type="match status" value="1"/>
</dbReference>
<dbReference type="Pfam" id="PF13932">
    <property type="entry name" value="SAM_GIDA_C"/>
    <property type="match status" value="1"/>
</dbReference>
<dbReference type="SMART" id="SM01228">
    <property type="entry name" value="GIDA_assoc_3"/>
    <property type="match status" value="1"/>
</dbReference>
<dbReference type="SUPFAM" id="SSF51905">
    <property type="entry name" value="FAD/NAD(P)-binding domain"/>
    <property type="match status" value="1"/>
</dbReference>
<dbReference type="PROSITE" id="PS01280">
    <property type="entry name" value="GIDA_1"/>
    <property type="match status" value="1"/>
</dbReference>
<dbReference type="PROSITE" id="PS01281">
    <property type="entry name" value="GIDA_2"/>
    <property type="match status" value="1"/>
</dbReference>
<keyword id="KW-0963">Cytoplasm</keyword>
<keyword id="KW-0274">FAD</keyword>
<keyword id="KW-0285">Flavoprotein</keyword>
<keyword id="KW-0520">NAD</keyword>
<keyword id="KW-1185">Reference proteome</keyword>
<keyword id="KW-0819">tRNA processing</keyword>
<protein>
    <recommendedName>
        <fullName evidence="1">tRNA uridine 5-carboxymethylaminomethyl modification enzyme MnmG</fullName>
    </recommendedName>
    <alternativeName>
        <fullName evidence="1">Glucose-inhibited division protein A</fullName>
    </alternativeName>
</protein>
<feature type="chain" id="PRO_1000122746" description="tRNA uridine 5-carboxymethylaminomethyl modification enzyme MnmG">
    <location>
        <begin position="1"/>
        <end position="629"/>
    </location>
</feature>
<feature type="binding site" evidence="1">
    <location>
        <begin position="13"/>
        <end position="18"/>
    </location>
    <ligand>
        <name>FAD</name>
        <dbReference type="ChEBI" id="CHEBI:57692"/>
    </ligand>
</feature>
<feature type="binding site" evidence="1">
    <location>
        <position position="125"/>
    </location>
    <ligand>
        <name>FAD</name>
        <dbReference type="ChEBI" id="CHEBI:57692"/>
    </ligand>
</feature>
<feature type="binding site" evidence="1">
    <location>
        <position position="180"/>
    </location>
    <ligand>
        <name>FAD</name>
        <dbReference type="ChEBI" id="CHEBI:57692"/>
    </ligand>
</feature>
<feature type="binding site" evidence="1">
    <location>
        <begin position="273"/>
        <end position="287"/>
    </location>
    <ligand>
        <name>NAD(+)</name>
        <dbReference type="ChEBI" id="CHEBI:57540"/>
    </ligand>
</feature>
<feature type="binding site" evidence="1">
    <location>
        <position position="370"/>
    </location>
    <ligand>
        <name>FAD</name>
        <dbReference type="ChEBI" id="CHEBI:57692"/>
    </ligand>
</feature>
<name>MNMG_ECO27</name>
<organism>
    <name type="scientific">Escherichia coli O127:H6 (strain E2348/69 / EPEC)</name>
    <dbReference type="NCBI Taxonomy" id="574521"/>
    <lineage>
        <taxon>Bacteria</taxon>
        <taxon>Pseudomonadati</taxon>
        <taxon>Pseudomonadota</taxon>
        <taxon>Gammaproteobacteria</taxon>
        <taxon>Enterobacterales</taxon>
        <taxon>Enterobacteriaceae</taxon>
        <taxon>Escherichia</taxon>
    </lineage>
</organism>
<comment type="function">
    <text evidence="1">NAD-binding protein involved in the addition of a carboxymethylaminomethyl (cmnm) group at the wobble position (U34) of certain tRNAs, forming tRNA-cmnm(5)s(2)U34.</text>
</comment>
<comment type="cofactor">
    <cofactor evidence="1">
        <name>FAD</name>
        <dbReference type="ChEBI" id="CHEBI:57692"/>
    </cofactor>
</comment>
<comment type="subunit">
    <text evidence="1">Homodimer. Heterotetramer of two MnmE and two MnmG subunits.</text>
</comment>
<comment type="subcellular location">
    <subcellularLocation>
        <location evidence="1">Cytoplasm</location>
    </subcellularLocation>
</comment>
<comment type="similarity">
    <text evidence="1">Belongs to the MnmG family.</text>
</comment>
<proteinExistence type="inferred from homology"/>
<evidence type="ECO:0000255" key="1">
    <source>
        <dbReference type="HAMAP-Rule" id="MF_00129"/>
    </source>
</evidence>
<gene>
    <name evidence="1" type="primary">mnmG</name>
    <name evidence="1" type="synonym">gidA</name>
    <name type="ordered locus">E2348C_4051</name>
</gene>